<evidence type="ECO:0000250" key="1">
    <source>
        <dbReference type="UniProtKB" id="P04798"/>
    </source>
</evidence>
<evidence type="ECO:0000255" key="2"/>
<evidence type="ECO:0000255" key="3">
    <source>
        <dbReference type="PROSITE-ProRule" id="PRU00498"/>
    </source>
</evidence>
<evidence type="ECO:0000269" key="4">
    <source>
    </source>
</evidence>
<evidence type="ECO:0000269" key="5">
    <source>
    </source>
</evidence>
<evidence type="ECO:0000269" key="6">
    <source>
    </source>
</evidence>
<evidence type="ECO:0000269" key="7">
    <source>
    </source>
</evidence>
<evidence type="ECO:0000303" key="8">
    <source>
    </source>
</evidence>
<evidence type="ECO:0000305" key="9"/>
<accession>L0MYS8</accession>
<organism>
    <name type="scientific">Phomopsis amygdali</name>
    <name type="common">Fusicoccum amygdali</name>
    <dbReference type="NCBI Taxonomy" id="1214568"/>
    <lineage>
        <taxon>Eukaryota</taxon>
        <taxon>Fungi</taxon>
        <taxon>Dikarya</taxon>
        <taxon>Ascomycota</taxon>
        <taxon>Pezizomycotina</taxon>
        <taxon>Sordariomycetes</taxon>
        <taxon>Sordariomycetidae</taxon>
        <taxon>Diaporthales</taxon>
        <taxon>Diaporthaceae</taxon>
        <taxon>Diaporthe</taxon>
    </lineage>
</organism>
<proteinExistence type="evidence at protein level"/>
<protein>
    <recommendedName>
        <fullName evidence="8">Dideacetyl fusicoccin A C-19 hydroxylase</fullName>
        <ecNumber evidence="7">1.-.-.-</ecNumber>
    </recommendedName>
    <alternativeName>
        <fullName evidence="8">Cytochrome P450 monooxygenase PaP450-5</fullName>
    </alternativeName>
    <alternativeName>
        <fullName evidence="8">Fusicoccin A biosynthetic gene clusters protein 12</fullName>
    </alternativeName>
</protein>
<feature type="chain" id="PRO_0000445450" description="Dideacetyl fusicoccin A C-19 hydroxylase">
    <location>
        <begin position="1"/>
        <end position="519"/>
    </location>
</feature>
<feature type="transmembrane region" description="Helical" evidence="2">
    <location>
        <begin position="16"/>
        <end position="36"/>
    </location>
</feature>
<feature type="binding site" description="axial binding residue" evidence="1">
    <location>
        <position position="454"/>
    </location>
    <ligand>
        <name>heme</name>
        <dbReference type="ChEBI" id="CHEBI:30413"/>
    </ligand>
    <ligandPart>
        <name>Fe</name>
        <dbReference type="ChEBI" id="CHEBI:18248"/>
    </ligandPart>
</feature>
<feature type="glycosylation site" description="N-linked (GlcNAc...) asparagine" evidence="3">
    <location>
        <position position="177"/>
    </location>
</feature>
<feature type="glycosylation site" description="N-linked (GlcNAc...) asparagine" evidence="3">
    <location>
        <position position="327"/>
    </location>
</feature>
<feature type="glycosylation site" description="N-linked (GlcNAc...) asparagine" evidence="3">
    <location>
        <position position="414"/>
    </location>
</feature>
<feature type="glycosylation site" description="N-linked (GlcNAc...) asparagine" evidence="3">
    <location>
        <position position="432"/>
    </location>
</feature>
<name>FC12_PHOAM</name>
<reference key="1">
    <citation type="journal article" date="2012" name="PLoS ONE">
        <title>Molecular breeding of a fungus producing a precursor diterpene suitable for semi-synthesis by dissection of the biosynthetic machinery.</title>
        <authorList>
            <person name="Noike M."/>
            <person name="Ono Y."/>
            <person name="Araki Y."/>
            <person name="Tanio R."/>
            <person name="Higuchi Y."/>
            <person name="Nitta H."/>
            <person name="Hamano Y."/>
            <person name="Toyomasu T."/>
            <person name="Sassa T."/>
            <person name="Kato N."/>
            <person name="Dairi T."/>
        </authorList>
    </citation>
    <scope>NUCLEOTIDE SEQUENCE [MRNA]</scope>
    <scope>FUNCTION</scope>
    <scope>CATALYTIC ACTIVITY</scope>
    <scope>PATHWAY</scope>
</reference>
<reference key="2">
    <citation type="journal article" date="2007" name="Proc. Natl. Acad. Sci. U.S.A.">
        <title>Fusicoccins are biosynthesized by an unusual chimera diterpene synthase in fungi.</title>
        <authorList>
            <person name="Toyomasu T."/>
            <person name="Tsukahara M."/>
            <person name="Kaneko A."/>
            <person name="Niida R."/>
            <person name="Mitsuhashi W."/>
            <person name="Dairi T."/>
            <person name="Kato N."/>
            <person name="Sassa T."/>
        </authorList>
    </citation>
    <scope>FUNCTION</scope>
</reference>
<reference key="3">
    <citation type="journal article" date="2011" name="J. Am. Chem. Soc.">
        <title>Dioxygenases, key enzymes to determine the aglycon structures of fusicoccin and brassicicene, diterpene compounds produced by fungi.</title>
        <authorList>
            <person name="Ono Y."/>
            <person name="Minami A."/>
            <person name="Noike M."/>
            <person name="Higuchi Y."/>
            <person name="Toyomasu T."/>
            <person name="Sassa T."/>
            <person name="Kato N."/>
            <person name="Dairi T."/>
        </authorList>
    </citation>
    <scope>FUNCTION</scope>
</reference>
<reference key="4">
    <citation type="journal article" date="2012" name="ChemBioChem">
        <title>An enzyme catalyzing O-prenylation of the glucose moiety of fusicoccin A, a diterpene glucoside produced by the fungus Phomopsis amygdali.</title>
        <authorList>
            <person name="Noike M."/>
            <person name="Liu C."/>
            <person name="Ono Y."/>
            <person name="Hamano Y."/>
            <person name="Toyomasu T."/>
            <person name="Sassa T."/>
            <person name="Kato N."/>
            <person name="Dairi T."/>
        </authorList>
    </citation>
    <scope>FUNCTION</scope>
</reference>
<keyword id="KW-0325">Glycoprotein</keyword>
<keyword id="KW-0349">Heme</keyword>
<keyword id="KW-0408">Iron</keyword>
<keyword id="KW-0472">Membrane</keyword>
<keyword id="KW-0479">Metal-binding</keyword>
<keyword id="KW-0503">Monooxygenase</keyword>
<keyword id="KW-0560">Oxidoreductase</keyword>
<keyword id="KW-0812">Transmembrane</keyword>
<keyword id="KW-1133">Transmembrane helix</keyword>
<sequence length="519" mass="58883">MVVDDLHRLASSQFKLPVAPILFTALAATIGAFLLSSLRSYILYHRKMSLFPAPNSDSAFRSFFSSKARDKFLSNAQELIRQGFSQNKFAIRLKTDFTDVLLLSPRYLPQLRTEDRLQGGPYTVQELLGYLPGFEPFRFADQMPKFIPDVILTRMNRYLSNVPASITEEVEVNLAENWTDEKDWHSVHLHGTMLGLVGQCSIRTFLGPEMCRKKRWVDLHTEYTVAVVTAVQALRKWPRALVSIVQWFHPKAKAARALLNEARAMIQPMHEQRKRDMAAGKPVPADTLTWFEEVAKGQAYDAAVVQLTMALAGLHSSTDLLCAVMLNLSEHPDVVEALRQELVQVLKREGWKQTTFSQLTLMDSVLKESQRLKPVGRAFFKRVAVDNIKLDHGVEIPKGAFVAVSNHGMWDPHNYTDPDKFDAYRFARMSDNKSSAFSTVSVEHTGFGFGKNSCPGRNYVALQLKIILAHLLLKYEWRLPDNYTPATFNNGFDLIADPFAQVLVRRRLEAPEVSLRQNT</sequence>
<comment type="function">
    <text evidence="4 5 6 7">Cytochrome P450 monooxygenase; part of the 2 gene clusters that mediate the biosynthesis of fusicoccins, diterpene glucosides that display phytohormone-like activity and function as potent activators of plasma membrane H(+)-ATPases in plants by modifying 14-3-3 proteins and cause the plant disease constriction canker (PubMed:22870285). The first step in the pathway is performed by the fusicoccadiene synthase PaFS that possesses both prenyl transferase and terpene cyclase activity, converting isopentenyl diphosphate and dimethylallyl diphosphate into geranylgeranyl diphosphate (GGDP) and successively converting GGDP into fusicocca-2,10(14)-diene, a precursor for fusicoccin H (PubMed:17360612). The second step is the oxidation at the C-8 position by the cytochrome P450 monooxygenase PaP450-2 to yield fusicocca-2,10(14)-diene-8-beta-ol (PubMed:22870285). The cytochrome P450 monooxygenase PaP450-1 then catalyzes the hydroxylation at the C-16 position to produce fusicocca-2,10(14)-diene-8-beta,16-diol (PubMed:22870285). The dioxygenase fc-dox then catalyzes the 16-oxydation of fusicocca-2,10(14)-diene-8-beta,16-diol to yield an aldehyde (8-beta-hydroxyfusicocca-1,10(14)-dien-16-al) (PubMed:21299202, PubMed:22870285). The short-chain dehydrogenase/reductase fc-sdr catalyzes the reduction of the aldehyde to yield fusicocca-1,10(14)-diene-8-beta,16-diol (PubMed:21299202, PubMed:22870285). The next step is the hydroxylation at C-9 performed by the cytochrome P450 monooxygenase PaP450-3 that leads to fusicoccin H aglycon which is glycosylated to fusicoccin H by the O-glycosyltransferase PaGT (PubMed:22870285). Hydroxylation at C-12 by the cytochrome P450 monooxygenase PaP450-4 leads then to the production of fusicoccin Q and is followed by methylation by the O-methyltransferase PaMT to yield fusicoccin P (PubMed:22870285). Fusicoccin P is further converted to fusicoccin J via prenylation by the O-glucose prenyltransferase PaPT (PubMed:22287087). Cytochrome P450 monooxygenase PaP450-5 then performs hydroxylation at C-19 to yield dideacetyl-fusicoccin A which is acetylated to 3'-O-deacetyl-fusicoccin A by the O-acetyltransferase PaAT-2 (PubMed:22870285). Finally, a another acetylation by the O-acetyltransferase PaAT-1 yields fusicoccin A (PubMed:22870285).</text>
</comment>
<comment type="cofactor">
    <cofactor evidence="1">
        <name>heme</name>
        <dbReference type="ChEBI" id="CHEBI:30413"/>
    </cofactor>
</comment>
<comment type="pathway">
    <text evidence="7">Mycotoxin biosynthesis.</text>
</comment>
<comment type="subcellular location">
    <subcellularLocation>
        <location evidence="2">Membrane</location>
        <topology evidence="2">Single-pass membrane protein</topology>
    </subcellularLocation>
</comment>
<comment type="similarity">
    <text evidence="9">Belongs to the cytochrome P450 family.</text>
</comment>
<gene>
    <name evidence="8" type="primary">PaP450-5</name>
    <name evidence="8" type="synonym">orf12</name>
</gene>
<dbReference type="EC" id="1.-.-.-" evidence="7"/>
<dbReference type="EMBL" id="AB686278">
    <property type="protein sequence ID" value="BAM71037.1"/>
    <property type="molecule type" value="mRNA"/>
</dbReference>
<dbReference type="SMR" id="L0MYS8"/>
<dbReference type="GlyCosmos" id="L0MYS8">
    <property type="glycosylation" value="4 sites, No reported glycans"/>
</dbReference>
<dbReference type="GO" id="GO:0016020">
    <property type="term" value="C:membrane"/>
    <property type="evidence" value="ECO:0007669"/>
    <property type="project" value="UniProtKB-SubCell"/>
</dbReference>
<dbReference type="GO" id="GO:0020037">
    <property type="term" value="F:heme binding"/>
    <property type="evidence" value="ECO:0007669"/>
    <property type="project" value="InterPro"/>
</dbReference>
<dbReference type="GO" id="GO:0005506">
    <property type="term" value="F:iron ion binding"/>
    <property type="evidence" value="ECO:0007669"/>
    <property type="project" value="InterPro"/>
</dbReference>
<dbReference type="GO" id="GO:0004497">
    <property type="term" value="F:monooxygenase activity"/>
    <property type="evidence" value="ECO:0007669"/>
    <property type="project" value="UniProtKB-KW"/>
</dbReference>
<dbReference type="GO" id="GO:0016705">
    <property type="term" value="F:oxidoreductase activity, acting on paired donors, with incorporation or reduction of molecular oxygen"/>
    <property type="evidence" value="ECO:0007669"/>
    <property type="project" value="InterPro"/>
</dbReference>
<dbReference type="GO" id="GO:0019748">
    <property type="term" value="P:secondary metabolic process"/>
    <property type="evidence" value="ECO:0007669"/>
    <property type="project" value="UniProtKB-ARBA"/>
</dbReference>
<dbReference type="CDD" id="cd11041">
    <property type="entry name" value="CYP503A1-like"/>
    <property type="match status" value="1"/>
</dbReference>
<dbReference type="Gene3D" id="1.10.630.10">
    <property type="entry name" value="Cytochrome P450"/>
    <property type="match status" value="1"/>
</dbReference>
<dbReference type="InterPro" id="IPR001128">
    <property type="entry name" value="Cyt_P450"/>
</dbReference>
<dbReference type="InterPro" id="IPR002403">
    <property type="entry name" value="Cyt_P450_E_grp-IV"/>
</dbReference>
<dbReference type="InterPro" id="IPR036396">
    <property type="entry name" value="Cyt_P450_sf"/>
</dbReference>
<dbReference type="PANTHER" id="PTHR46206">
    <property type="entry name" value="CYTOCHROME P450"/>
    <property type="match status" value="1"/>
</dbReference>
<dbReference type="PANTHER" id="PTHR46206:SF2">
    <property type="entry name" value="CYTOCHROME P450 MONOOXYGENASE AUSG-RELATED"/>
    <property type="match status" value="1"/>
</dbReference>
<dbReference type="Pfam" id="PF00067">
    <property type="entry name" value="p450"/>
    <property type="match status" value="1"/>
</dbReference>
<dbReference type="PRINTS" id="PR00465">
    <property type="entry name" value="EP450IV"/>
</dbReference>
<dbReference type="PRINTS" id="PR00385">
    <property type="entry name" value="P450"/>
</dbReference>
<dbReference type="SUPFAM" id="SSF48264">
    <property type="entry name" value="Cytochrome P450"/>
    <property type="match status" value="1"/>
</dbReference>